<evidence type="ECO:0000255" key="1">
    <source>
        <dbReference type="HAMAP-Rule" id="MF_01274"/>
    </source>
</evidence>
<accession>Q48D21</accession>
<sequence length="249" mass="26512">MILELDCGNSFIKWRITAKNDAAVISGGVVGSDAALLMHLSNLPDTSFTDCRLVSVRSAEETARLVSLLADTFSVAPVCAEPAQELAGVINGYDDFARLGLDRWLAFVGAYHLARSACLVIDLGTAVTSDFVDAGGAHLGGFICPGMPLMRNQLRTHTRRIRYDDTEAEKALARLVPGRATAEAVERGCSLMLRGFALTQIEIAQGYWGNDFAIFVTGGDAALVADVLPGARIVPDLVFVGLALACPLR</sequence>
<comment type="function">
    <text evidence="1">Catalyzes the phosphorylation of pantothenate (Pan), the first step in CoA biosynthesis.</text>
</comment>
<comment type="catalytic activity">
    <reaction evidence="1">
        <text>(R)-pantothenate + ATP = (R)-4'-phosphopantothenate + ADP + H(+)</text>
        <dbReference type="Rhea" id="RHEA:16373"/>
        <dbReference type="ChEBI" id="CHEBI:10986"/>
        <dbReference type="ChEBI" id="CHEBI:15378"/>
        <dbReference type="ChEBI" id="CHEBI:29032"/>
        <dbReference type="ChEBI" id="CHEBI:30616"/>
        <dbReference type="ChEBI" id="CHEBI:456216"/>
        <dbReference type="EC" id="2.7.1.33"/>
    </reaction>
</comment>
<comment type="cofactor">
    <cofactor evidence="1">
        <name>NH4(+)</name>
        <dbReference type="ChEBI" id="CHEBI:28938"/>
    </cofactor>
    <cofactor evidence="1">
        <name>K(+)</name>
        <dbReference type="ChEBI" id="CHEBI:29103"/>
    </cofactor>
    <text evidence="1">A monovalent cation. Ammonium or potassium.</text>
</comment>
<comment type="pathway">
    <text evidence="1">Cofactor biosynthesis; coenzyme A biosynthesis; CoA from (R)-pantothenate: step 1/5.</text>
</comment>
<comment type="subunit">
    <text evidence="1">Homodimer.</text>
</comment>
<comment type="subcellular location">
    <subcellularLocation>
        <location evidence="1">Cytoplasm</location>
    </subcellularLocation>
</comment>
<comment type="similarity">
    <text evidence="1">Belongs to the type III pantothenate kinase family.</text>
</comment>
<name>COAX_PSE14</name>
<feature type="chain" id="PRO_0000267578" description="Type III pantothenate kinase">
    <location>
        <begin position="1"/>
        <end position="249"/>
    </location>
</feature>
<feature type="active site" description="Proton acceptor" evidence="1">
    <location>
        <position position="102"/>
    </location>
</feature>
<feature type="binding site" evidence="1">
    <location>
        <begin position="6"/>
        <end position="13"/>
    </location>
    <ligand>
        <name>ATP</name>
        <dbReference type="ChEBI" id="CHEBI:30616"/>
    </ligand>
</feature>
<feature type="binding site" evidence="1">
    <location>
        <position position="93"/>
    </location>
    <ligand>
        <name>substrate</name>
    </ligand>
</feature>
<feature type="binding site" evidence="1">
    <location>
        <begin position="100"/>
        <end position="103"/>
    </location>
    <ligand>
        <name>substrate</name>
    </ligand>
</feature>
<feature type="binding site" evidence="1">
    <location>
        <position position="122"/>
    </location>
    <ligand>
        <name>K(+)</name>
        <dbReference type="ChEBI" id="CHEBI:29103"/>
    </ligand>
</feature>
<feature type="binding site" evidence="1">
    <location>
        <position position="125"/>
    </location>
    <ligand>
        <name>ATP</name>
        <dbReference type="ChEBI" id="CHEBI:30616"/>
    </ligand>
</feature>
<feature type="binding site" evidence="1">
    <location>
        <position position="181"/>
    </location>
    <ligand>
        <name>substrate</name>
    </ligand>
</feature>
<reference key="1">
    <citation type="journal article" date="2005" name="J. Bacteriol.">
        <title>Whole-genome sequence analysis of Pseudomonas syringae pv. phaseolicola 1448A reveals divergence among pathovars in genes involved in virulence and transposition.</title>
        <authorList>
            <person name="Joardar V."/>
            <person name="Lindeberg M."/>
            <person name="Jackson R.W."/>
            <person name="Selengut J."/>
            <person name="Dodson R."/>
            <person name="Brinkac L.M."/>
            <person name="Daugherty S.C."/>
            <person name="DeBoy R.T."/>
            <person name="Durkin A.S."/>
            <person name="Gwinn Giglio M."/>
            <person name="Madupu R."/>
            <person name="Nelson W.C."/>
            <person name="Rosovitz M.J."/>
            <person name="Sullivan S.A."/>
            <person name="Crabtree J."/>
            <person name="Creasy T."/>
            <person name="Davidsen T.M."/>
            <person name="Haft D.H."/>
            <person name="Zafar N."/>
            <person name="Zhou L."/>
            <person name="Halpin R."/>
            <person name="Holley T."/>
            <person name="Khouri H.M."/>
            <person name="Feldblyum T.V."/>
            <person name="White O."/>
            <person name="Fraser C.M."/>
            <person name="Chatterjee A.K."/>
            <person name="Cartinhour S."/>
            <person name="Schneider D."/>
            <person name="Mansfield J.W."/>
            <person name="Collmer A."/>
            <person name="Buell R."/>
        </authorList>
    </citation>
    <scope>NUCLEOTIDE SEQUENCE [LARGE SCALE GENOMIC DNA]</scope>
    <source>
        <strain>1448A / Race 6</strain>
    </source>
</reference>
<dbReference type="EC" id="2.7.1.33" evidence="1"/>
<dbReference type="EMBL" id="CP000058">
    <property type="protein sequence ID" value="AAZ33284.1"/>
    <property type="molecule type" value="Genomic_DNA"/>
</dbReference>
<dbReference type="RefSeq" id="WP_011169633.1">
    <property type="nucleotide sequence ID" value="NC_005773.3"/>
</dbReference>
<dbReference type="SMR" id="Q48D21"/>
<dbReference type="KEGG" id="psp:PSPPH_4611"/>
<dbReference type="eggNOG" id="COG1521">
    <property type="taxonomic scope" value="Bacteria"/>
</dbReference>
<dbReference type="HOGENOM" id="CLU_066627_0_1_6"/>
<dbReference type="UniPathway" id="UPA00241">
    <property type="reaction ID" value="UER00352"/>
</dbReference>
<dbReference type="Proteomes" id="UP000000551">
    <property type="component" value="Chromosome"/>
</dbReference>
<dbReference type="GO" id="GO:0005737">
    <property type="term" value="C:cytoplasm"/>
    <property type="evidence" value="ECO:0007669"/>
    <property type="project" value="UniProtKB-SubCell"/>
</dbReference>
<dbReference type="GO" id="GO:0005524">
    <property type="term" value="F:ATP binding"/>
    <property type="evidence" value="ECO:0007669"/>
    <property type="project" value="UniProtKB-UniRule"/>
</dbReference>
<dbReference type="GO" id="GO:0046872">
    <property type="term" value="F:metal ion binding"/>
    <property type="evidence" value="ECO:0007669"/>
    <property type="project" value="UniProtKB-KW"/>
</dbReference>
<dbReference type="GO" id="GO:0004594">
    <property type="term" value="F:pantothenate kinase activity"/>
    <property type="evidence" value="ECO:0007669"/>
    <property type="project" value="UniProtKB-UniRule"/>
</dbReference>
<dbReference type="GO" id="GO:0015937">
    <property type="term" value="P:coenzyme A biosynthetic process"/>
    <property type="evidence" value="ECO:0007669"/>
    <property type="project" value="UniProtKB-UniRule"/>
</dbReference>
<dbReference type="CDD" id="cd24015">
    <property type="entry name" value="ASKHA_NBD_PanK-III"/>
    <property type="match status" value="1"/>
</dbReference>
<dbReference type="Gene3D" id="3.30.420.40">
    <property type="match status" value="2"/>
</dbReference>
<dbReference type="HAMAP" id="MF_01274">
    <property type="entry name" value="Pantothen_kinase_3"/>
    <property type="match status" value="1"/>
</dbReference>
<dbReference type="InterPro" id="IPR043129">
    <property type="entry name" value="ATPase_NBD"/>
</dbReference>
<dbReference type="InterPro" id="IPR004619">
    <property type="entry name" value="Type_III_PanK"/>
</dbReference>
<dbReference type="NCBIfam" id="TIGR00671">
    <property type="entry name" value="baf"/>
    <property type="match status" value="1"/>
</dbReference>
<dbReference type="NCBIfam" id="NF009857">
    <property type="entry name" value="PRK13322.1-2"/>
    <property type="match status" value="1"/>
</dbReference>
<dbReference type="NCBIfam" id="NF009859">
    <property type="entry name" value="PRK13322.1-4"/>
    <property type="match status" value="1"/>
</dbReference>
<dbReference type="PANTHER" id="PTHR34265">
    <property type="entry name" value="TYPE III PANTOTHENATE KINASE"/>
    <property type="match status" value="1"/>
</dbReference>
<dbReference type="PANTHER" id="PTHR34265:SF1">
    <property type="entry name" value="TYPE III PANTOTHENATE KINASE"/>
    <property type="match status" value="1"/>
</dbReference>
<dbReference type="Pfam" id="PF03309">
    <property type="entry name" value="Pan_kinase"/>
    <property type="match status" value="1"/>
</dbReference>
<dbReference type="SUPFAM" id="SSF53067">
    <property type="entry name" value="Actin-like ATPase domain"/>
    <property type="match status" value="2"/>
</dbReference>
<proteinExistence type="inferred from homology"/>
<protein>
    <recommendedName>
        <fullName evidence="1">Type III pantothenate kinase</fullName>
        <ecNumber evidence="1">2.7.1.33</ecNumber>
    </recommendedName>
    <alternativeName>
        <fullName evidence="1">PanK-III</fullName>
    </alternativeName>
    <alternativeName>
        <fullName evidence="1">Pantothenic acid kinase</fullName>
    </alternativeName>
</protein>
<gene>
    <name evidence="1" type="primary">coaX</name>
    <name type="ordered locus">PSPPH_4611</name>
</gene>
<keyword id="KW-0067">ATP-binding</keyword>
<keyword id="KW-0173">Coenzyme A biosynthesis</keyword>
<keyword id="KW-0963">Cytoplasm</keyword>
<keyword id="KW-0418">Kinase</keyword>
<keyword id="KW-0479">Metal-binding</keyword>
<keyword id="KW-0547">Nucleotide-binding</keyword>
<keyword id="KW-0630">Potassium</keyword>
<keyword id="KW-0808">Transferase</keyword>
<organism>
    <name type="scientific">Pseudomonas savastanoi pv. phaseolicola (strain 1448A / Race 6)</name>
    <name type="common">Pseudomonas syringae pv. phaseolicola (strain 1448A / Race 6)</name>
    <dbReference type="NCBI Taxonomy" id="264730"/>
    <lineage>
        <taxon>Bacteria</taxon>
        <taxon>Pseudomonadati</taxon>
        <taxon>Pseudomonadota</taxon>
        <taxon>Gammaproteobacteria</taxon>
        <taxon>Pseudomonadales</taxon>
        <taxon>Pseudomonadaceae</taxon>
        <taxon>Pseudomonas</taxon>
    </lineage>
</organism>